<evidence type="ECO:0000250" key="1">
    <source>
        <dbReference type="UniProtKB" id="P86405"/>
    </source>
</evidence>
<evidence type="ECO:0000255" key="2">
    <source>
        <dbReference type="PROSITE-ProRule" id="PRU01210"/>
    </source>
</evidence>
<evidence type="ECO:0000269" key="3">
    <source>
    </source>
</evidence>
<evidence type="ECO:0000303" key="4">
    <source>
    </source>
</evidence>
<evidence type="ECO:0000305" key="5"/>
<evidence type="ECO:0000305" key="6">
    <source>
    </source>
</evidence>
<organism>
    <name type="scientific">Mesobuthus eupeus</name>
    <name type="common">Lesser Asian scorpion</name>
    <name type="synonym">Buthus eupeus</name>
    <dbReference type="NCBI Taxonomy" id="34648"/>
    <lineage>
        <taxon>Eukaryota</taxon>
        <taxon>Metazoa</taxon>
        <taxon>Ecdysozoa</taxon>
        <taxon>Arthropoda</taxon>
        <taxon>Chelicerata</taxon>
        <taxon>Arachnida</taxon>
        <taxon>Scorpiones</taxon>
        <taxon>Buthida</taxon>
        <taxon>Buthoidea</taxon>
        <taxon>Buthidae</taxon>
        <taxon>Mesobuthus</taxon>
    </lineage>
</organism>
<feature type="chain" id="PRO_0000447453" description="Sodium channel neurotoxin MeuNaTxalpha-10" evidence="6">
    <location>
        <begin position="1"/>
        <end position="66"/>
    </location>
</feature>
<feature type="propeptide" id="PRO_0000447454" description="Removed by a carboxypeptidase" evidence="5">
    <location>
        <position position="67"/>
    </location>
</feature>
<feature type="domain" description="LCN-type CS-alpha/beta" evidence="2">
    <location>
        <begin position="2"/>
        <end position="66"/>
    </location>
</feature>
<feature type="disulfide bond" evidence="1">
    <location>
        <begin position="12"/>
        <end position="65"/>
    </location>
</feature>
<feature type="disulfide bond" evidence="1">
    <location>
        <begin position="16"/>
        <end position="38"/>
    </location>
</feature>
<feature type="disulfide bond" evidence="1">
    <location>
        <begin position="24"/>
        <end position="48"/>
    </location>
</feature>
<feature type="disulfide bond" evidence="1">
    <location>
        <begin position="28"/>
        <end position="50"/>
    </location>
</feature>
<sequence length="67" mass="7333">ARDGYIAKPHNCVYECFDAFSSYCNGVCTKNGAKSGYCQILGIYGNGCWCIALPDNVPIRIPGKCHR</sequence>
<reference key="1">
    <citation type="journal article" date="2012" name="Mol. Cell. Proteomics">
        <title>Evolutionary diversification of Mesobuthus alpha-scorpion toxins affecting sodium channels.</title>
        <authorList>
            <person name="Zhu S."/>
            <person name="Peigneur S."/>
            <person name="Gao B."/>
            <person name="Lu X."/>
            <person name="Cao C."/>
            <person name="Tytgat J."/>
        </authorList>
    </citation>
    <scope>NUCLEOTIDE SEQUENCE [MRNA]</scope>
    <source>
        <tissue>Venom gland</tissue>
    </source>
</reference>
<comment type="function">
    <text evidence="1">Alpha toxins bind voltage-independently at site-3 of sodium channels (Nav) and inhibit the inactivation of the activated channels, thereby blocking neuronal transmission.</text>
</comment>
<comment type="subcellular location">
    <subcellularLocation>
        <location evidence="3">Secreted</location>
    </subcellularLocation>
</comment>
<comment type="tissue specificity">
    <text evidence="6">Expressed by the venom gland.</text>
</comment>
<comment type="domain">
    <text evidence="5">Has the structural arrangement of an alpha-helix connected to antiparallel beta-sheets by disulfide bonds (CS-alpha/beta).</text>
</comment>
<comment type="similarity">
    <text evidence="5">Belongs to the long (4 C-C) scorpion toxin superfamily. Sodium channel inhibitor family. Alpha subfamily.</text>
</comment>
<dbReference type="EMBL" id="GQ249201">
    <property type="protein sequence ID" value="ADF49573.1"/>
    <property type="molecule type" value="mRNA"/>
</dbReference>
<dbReference type="SMR" id="D8UWD6"/>
<dbReference type="GO" id="GO:0005576">
    <property type="term" value="C:extracellular region"/>
    <property type="evidence" value="ECO:0007669"/>
    <property type="project" value="UniProtKB-SubCell"/>
</dbReference>
<dbReference type="GO" id="GO:0019871">
    <property type="term" value="F:sodium channel inhibitor activity"/>
    <property type="evidence" value="ECO:0007669"/>
    <property type="project" value="InterPro"/>
</dbReference>
<dbReference type="GO" id="GO:0090729">
    <property type="term" value="F:toxin activity"/>
    <property type="evidence" value="ECO:0007669"/>
    <property type="project" value="UniProtKB-KW"/>
</dbReference>
<dbReference type="GO" id="GO:0006952">
    <property type="term" value="P:defense response"/>
    <property type="evidence" value="ECO:0007669"/>
    <property type="project" value="InterPro"/>
</dbReference>
<dbReference type="CDD" id="cd23106">
    <property type="entry name" value="neurotoxins_LC_scorpion"/>
    <property type="match status" value="1"/>
</dbReference>
<dbReference type="FunFam" id="3.30.30.10:FF:000002">
    <property type="entry name" value="Alpha-like toxin BmK-M1"/>
    <property type="match status" value="1"/>
</dbReference>
<dbReference type="Gene3D" id="3.30.30.10">
    <property type="entry name" value="Knottin, scorpion toxin-like"/>
    <property type="match status" value="1"/>
</dbReference>
<dbReference type="InterPro" id="IPR044062">
    <property type="entry name" value="LCN-type_CS_alpha_beta_dom"/>
</dbReference>
<dbReference type="InterPro" id="IPR003614">
    <property type="entry name" value="Scorpion_toxin-like"/>
</dbReference>
<dbReference type="InterPro" id="IPR036574">
    <property type="entry name" value="Scorpion_toxin-like_sf"/>
</dbReference>
<dbReference type="InterPro" id="IPR018218">
    <property type="entry name" value="Scorpion_toxinL"/>
</dbReference>
<dbReference type="InterPro" id="IPR002061">
    <property type="entry name" value="Scorpion_toxinL/defensin"/>
</dbReference>
<dbReference type="Pfam" id="PF00537">
    <property type="entry name" value="Toxin_3"/>
    <property type="match status" value="1"/>
</dbReference>
<dbReference type="PRINTS" id="PR00285">
    <property type="entry name" value="SCORPNTOXIN"/>
</dbReference>
<dbReference type="SMART" id="SM00505">
    <property type="entry name" value="Knot1"/>
    <property type="match status" value="1"/>
</dbReference>
<dbReference type="SUPFAM" id="SSF57095">
    <property type="entry name" value="Scorpion toxin-like"/>
    <property type="match status" value="1"/>
</dbReference>
<dbReference type="PROSITE" id="PS51863">
    <property type="entry name" value="LCN_CSAB"/>
    <property type="match status" value="1"/>
</dbReference>
<accession>D8UWD6</accession>
<name>SCXNA_MESEU</name>
<keyword id="KW-1015">Disulfide bond</keyword>
<keyword id="KW-0872">Ion channel impairing toxin</keyword>
<keyword id="KW-0528">Neurotoxin</keyword>
<keyword id="KW-0964">Secreted</keyword>
<keyword id="KW-0800">Toxin</keyword>
<keyword id="KW-0738">Voltage-gated sodium channel impairing toxin</keyword>
<protein>
    <recommendedName>
        <fullName evidence="4">Sodium channel neurotoxin MeuNaTxalpha-10</fullName>
    </recommendedName>
</protein>
<proteinExistence type="inferred from homology"/>